<gene>
    <name type="ORF">ORF7</name>
</gene>
<comment type="similarity">
    <text evidence="2">Belongs to the sputnik virus V6 family.</text>
</comment>
<reference key="1">
    <citation type="journal article" date="2008" name="Nature">
        <title>The virophage as a unique parasite of the giant mimivirus.</title>
        <authorList>
            <person name="La Scola B."/>
            <person name="Desnues C."/>
            <person name="Pagnier I."/>
            <person name="Robert C."/>
            <person name="Barrassi L."/>
            <person name="Fournous G."/>
            <person name="Merchat M."/>
            <person name="Suzan-Monti M."/>
            <person name="Forterre P."/>
            <person name="Koonin E."/>
            <person name="Raoult D."/>
        </authorList>
    </citation>
    <scope>NUCLEOTIDE SEQUENCE [GENOMIC DNA]</scope>
</reference>
<organism>
    <name type="scientific">Sputnik virophage</name>
    <dbReference type="NCBI Taxonomy" id="543939"/>
    <lineage>
        <taxon>Viruses</taxon>
        <taxon>Varidnaviria</taxon>
        <taxon>Bamfordvirae</taxon>
        <taxon>Preplasmiviricota</taxon>
        <taxon>Maveriviricetes</taxon>
        <taxon>Priklausovirales</taxon>
        <taxon>Lavidaviridae</taxon>
        <taxon>Sputnikvirus</taxon>
        <taxon>Mimivirus-dependent virus Sputnik</taxon>
    </lineage>
</organism>
<proteinExistence type="inferred from homology"/>
<name>V7_SPTNK</name>
<protein>
    <recommendedName>
        <fullName>Uncharacterized protein V7</fullName>
    </recommendedName>
</protein>
<feature type="chain" id="PRO_0000369815" description="Uncharacterized protein V7">
    <location>
        <begin position="1"/>
        <end position="236"/>
    </location>
</feature>
<feature type="domain" description="Collagen-like">
    <location>
        <begin position="58"/>
        <end position="91"/>
    </location>
</feature>
<feature type="region of interest" description="Disordered" evidence="1">
    <location>
        <begin position="1"/>
        <end position="94"/>
    </location>
</feature>
<feature type="compositionally biased region" description="Polar residues" evidence="1">
    <location>
        <begin position="1"/>
        <end position="17"/>
    </location>
</feature>
<feature type="compositionally biased region" description="Low complexity" evidence="1">
    <location>
        <begin position="18"/>
        <end position="35"/>
    </location>
</feature>
<organismHost>
    <name type="scientific">Acanthamoeba polyphaga</name>
    <name type="common">Amoeba</name>
    <dbReference type="NCBI Taxonomy" id="5757"/>
</organismHost>
<dbReference type="EMBL" id="EU606015">
    <property type="protein sequence ID" value="ACF16991.1"/>
    <property type="molecule type" value="Genomic_DNA"/>
</dbReference>
<dbReference type="RefSeq" id="YP_002122368.1">
    <property type="nucleotide sequence ID" value="NC_011132.1"/>
</dbReference>
<dbReference type="SMR" id="B4YNE7"/>
<dbReference type="KEGG" id="vg:6760347"/>
<dbReference type="OrthoDB" id="31478at10239"/>
<dbReference type="Proteomes" id="UP000001863">
    <property type="component" value="Segment"/>
</dbReference>
<evidence type="ECO:0000256" key="1">
    <source>
        <dbReference type="SAM" id="MobiDB-lite"/>
    </source>
</evidence>
<evidence type="ECO:0000305" key="2"/>
<accession>B4YNE7</accession>
<keyword id="KW-1185">Reference proteome</keyword>
<sequence length="236" mass="24032">MSVSSLLQPNTYNINSKSQSLSNTPSNPTSQTNTLWSNNAYNPPHLMFGSSDLNNGTGPSGPKGDKGDPGSKGETGSQGIKGDPGVKGTTGGTIGSGTYFSGDLPSYVTTGGTETSIPEVSTGTVSFTTKTLGGNCNYSSGVFTTTETAAFYVAVTYIGTSVGSLSGSLTLSIFKNGGTAVYNTLVSYSGAGIQMSASLNGIIEMTPSDNIFIGFVNSGGEIQPNASGFTLNIFRI</sequence>